<reference key="1">
    <citation type="submission" date="2004-11" db="EMBL/GenBank/DDBJ databases">
        <authorList>
            <consortium name="NIH - Xenopus Gene Collection (XGC) project"/>
        </authorList>
    </citation>
    <scope>NUCLEOTIDE SEQUENCE [LARGE SCALE MRNA]</scope>
    <source>
        <tissue>Embryo</tissue>
    </source>
</reference>
<proteinExistence type="inferred from homology"/>
<comment type="function">
    <text evidence="1">Ubiquitin-like modifier which can be covalently attached via an isopeptide bond to lysine residues of substrate proteins as a monomer or a lysine-linked polymer. The so-called ufmylation, requires the ufm1-activating E1 enzyme uba5, the ufm1-conjugating E2 enzyme ufc1, and the ufm1-ligase E3 enzyme ufl1. Ufmylation is involved in various processes, such as ribosome recycling, response to DNA damage, transcription or reticulophagy (also called ER-phagy) induced in response to endoplasmic reticulum stress.</text>
</comment>
<comment type="subunit">
    <text evidence="1">Interacts with uba5. Interacts with ufc1.</text>
</comment>
<comment type="subcellular location">
    <subcellularLocation>
        <location evidence="1">Nucleus</location>
    </subcellularLocation>
    <subcellularLocation>
        <location evidence="1">Cytoplasm</location>
    </subcellularLocation>
</comment>
<comment type="PTM">
    <text evidence="1">UFM1 precursor is cleaved by UFSP1, promoting its maturation: processing of the C-terminal Ser-Cys dipeptide is required to expose its C-terminal conserved Gly residue.</text>
</comment>
<comment type="similarity">
    <text evidence="2">Belongs to the UFM1 family.</text>
</comment>
<protein>
    <recommendedName>
        <fullName evidence="1">Ubiquitin-fold modifier 1</fullName>
    </recommendedName>
</protein>
<name>UFM1_XENLA</name>
<gene>
    <name evidence="1" type="primary">ufm1</name>
</gene>
<evidence type="ECO:0000250" key="1">
    <source>
        <dbReference type="UniProtKB" id="P61960"/>
    </source>
</evidence>
<evidence type="ECO:0000305" key="2"/>
<feature type="chain" id="PRO_0000042136" description="Ubiquitin-fold modifier 1">
    <location>
        <begin position="1"/>
        <end position="83"/>
    </location>
</feature>
<feature type="propeptide" id="PRO_0000042137" description="Removed in mature form" evidence="1">
    <location>
        <begin position="84"/>
        <end position="85"/>
    </location>
</feature>
<feature type="cross-link" description="Glycyl lysine isopeptide (Lys-Gly) (interchain with G-Cter in UFM1)" evidence="1">
    <location>
        <position position="69"/>
    </location>
</feature>
<feature type="cross-link" description="Glycyl lysine isopeptide (Gly-Lys) (interchain with K-? in acceptor proteins)" evidence="1">
    <location>
        <position position="83"/>
    </location>
</feature>
<keyword id="KW-0963">Cytoplasm</keyword>
<keyword id="KW-1017">Isopeptide bond</keyword>
<keyword id="KW-0539">Nucleus</keyword>
<keyword id="KW-1185">Reference proteome</keyword>
<keyword id="KW-0832">Ubl conjugation</keyword>
<keyword id="KW-0833">Ubl conjugation pathway</keyword>
<organism>
    <name type="scientific">Xenopus laevis</name>
    <name type="common">African clawed frog</name>
    <dbReference type="NCBI Taxonomy" id="8355"/>
    <lineage>
        <taxon>Eukaryota</taxon>
        <taxon>Metazoa</taxon>
        <taxon>Chordata</taxon>
        <taxon>Craniata</taxon>
        <taxon>Vertebrata</taxon>
        <taxon>Euteleostomi</taxon>
        <taxon>Amphibia</taxon>
        <taxon>Batrachia</taxon>
        <taxon>Anura</taxon>
        <taxon>Pipoidea</taxon>
        <taxon>Pipidae</taxon>
        <taxon>Xenopodinae</taxon>
        <taxon>Xenopus</taxon>
        <taxon>Xenopus</taxon>
    </lineage>
</organism>
<accession>Q5RJW4</accession>
<dbReference type="EMBL" id="BC086478">
    <property type="protein sequence ID" value="AAH86478.1"/>
    <property type="molecule type" value="mRNA"/>
</dbReference>
<dbReference type="RefSeq" id="NP_001165187.1">
    <property type="nucleotide sequence ID" value="NM_001171716.1"/>
</dbReference>
<dbReference type="SMR" id="Q5RJW4"/>
<dbReference type="DNASU" id="495839"/>
<dbReference type="GeneID" id="495839"/>
<dbReference type="KEGG" id="xla:495839"/>
<dbReference type="AGR" id="Xenbase:XB-GENE-6253205"/>
<dbReference type="CTD" id="495839"/>
<dbReference type="Xenbase" id="XB-GENE-6253205">
    <property type="gene designation" value="ufm1.L"/>
</dbReference>
<dbReference type="OMA" id="CKSENRH"/>
<dbReference type="OrthoDB" id="284357at2759"/>
<dbReference type="Proteomes" id="UP000186698">
    <property type="component" value="Chromosome 2L"/>
</dbReference>
<dbReference type="Bgee" id="495839">
    <property type="expression patterns" value="Expressed in liver and 19 other cell types or tissues"/>
</dbReference>
<dbReference type="GO" id="GO:0005737">
    <property type="term" value="C:cytoplasm"/>
    <property type="evidence" value="ECO:0000250"/>
    <property type="project" value="UniProtKB"/>
</dbReference>
<dbReference type="GO" id="GO:0005634">
    <property type="term" value="C:nucleus"/>
    <property type="evidence" value="ECO:0000250"/>
    <property type="project" value="UniProtKB"/>
</dbReference>
<dbReference type="GO" id="GO:1990592">
    <property type="term" value="P:protein K69-linked ufmylation"/>
    <property type="evidence" value="ECO:0000250"/>
    <property type="project" value="UniProtKB"/>
</dbReference>
<dbReference type="GO" id="GO:0071569">
    <property type="term" value="P:protein ufmylation"/>
    <property type="evidence" value="ECO:0000250"/>
    <property type="project" value="UniProtKB"/>
</dbReference>
<dbReference type="GO" id="GO:0034976">
    <property type="term" value="P:response to endoplasmic reticulum stress"/>
    <property type="evidence" value="ECO:0000250"/>
    <property type="project" value="UniProtKB"/>
</dbReference>
<dbReference type="GO" id="GO:0061709">
    <property type="term" value="P:reticulophagy"/>
    <property type="evidence" value="ECO:0000250"/>
    <property type="project" value="UniProtKB"/>
</dbReference>
<dbReference type="CDD" id="cd01766">
    <property type="entry name" value="Ubl_UFM1"/>
    <property type="match status" value="1"/>
</dbReference>
<dbReference type="FunFam" id="3.10.20.90:FF:000044">
    <property type="entry name" value="Ubiquitin-fold modifier 1"/>
    <property type="match status" value="1"/>
</dbReference>
<dbReference type="Gene3D" id="3.10.20.90">
    <property type="entry name" value="Phosphatidylinositol 3-kinase Catalytic Subunit, Chain A, domain 1"/>
    <property type="match status" value="1"/>
</dbReference>
<dbReference type="InterPro" id="IPR029071">
    <property type="entry name" value="Ubiquitin-like_domsf"/>
</dbReference>
<dbReference type="InterPro" id="IPR005375">
    <property type="entry name" value="UFM1"/>
</dbReference>
<dbReference type="PANTHER" id="PTHR15825">
    <property type="entry name" value="UBIQUITIN-FOLD MODIFIER 1"/>
    <property type="match status" value="1"/>
</dbReference>
<dbReference type="PANTHER" id="PTHR15825:SF0">
    <property type="entry name" value="UBIQUITIN-FOLD MODIFIER 1"/>
    <property type="match status" value="1"/>
</dbReference>
<dbReference type="Pfam" id="PF03671">
    <property type="entry name" value="Ufm1"/>
    <property type="match status" value="1"/>
</dbReference>
<dbReference type="PIRSF" id="PIRSF038027">
    <property type="entry name" value="Ubiquitin-like_Ufm1"/>
    <property type="match status" value="1"/>
</dbReference>
<dbReference type="SUPFAM" id="SSF54236">
    <property type="entry name" value="Ubiquitin-like"/>
    <property type="match status" value="1"/>
</dbReference>
<sequence>MSKVTFKITLTSDPRLPYKVLCVPENTPFTAVLKFAAEEFKVPAATSAIITNDGIGLNPAQTAGNVFLKHGSELRLIPRDRVGSC</sequence>